<dbReference type="EC" id="3.4.25.2" evidence="1"/>
<dbReference type="EMBL" id="CP000697">
    <property type="protein sequence ID" value="ABQ30620.1"/>
    <property type="molecule type" value="Genomic_DNA"/>
</dbReference>
<dbReference type="RefSeq" id="WP_011942221.1">
    <property type="nucleotide sequence ID" value="NC_009484.1"/>
</dbReference>
<dbReference type="SMR" id="A5FYD8"/>
<dbReference type="STRING" id="349163.Acry_1410"/>
<dbReference type="MEROPS" id="T01.006"/>
<dbReference type="KEGG" id="acr:Acry_1410"/>
<dbReference type="eggNOG" id="COG5405">
    <property type="taxonomic scope" value="Bacteria"/>
</dbReference>
<dbReference type="HOGENOM" id="CLU_093872_1_0_5"/>
<dbReference type="Proteomes" id="UP000000245">
    <property type="component" value="Chromosome"/>
</dbReference>
<dbReference type="GO" id="GO:0009376">
    <property type="term" value="C:HslUV protease complex"/>
    <property type="evidence" value="ECO:0007669"/>
    <property type="project" value="UniProtKB-UniRule"/>
</dbReference>
<dbReference type="GO" id="GO:0005839">
    <property type="term" value="C:proteasome core complex"/>
    <property type="evidence" value="ECO:0007669"/>
    <property type="project" value="InterPro"/>
</dbReference>
<dbReference type="GO" id="GO:0046872">
    <property type="term" value="F:metal ion binding"/>
    <property type="evidence" value="ECO:0007669"/>
    <property type="project" value="UniProtKB-KW"/>
</dbReference>
<dbReference type="GO" id="GO:0004298">
    <property type="term" value="F:threonine-type endopeptidase activity"/>
    <property type="evidence" value="ECO:0007669"/>
    <property type="project" value="UniProtKB-KW"/>
</dbReference>
<dbReference type="GO" id="GO:0051603">
    <property type="term" value="P:proteolysis involved in protein catabolic process"/>
    <property type="evidence" value="ECO:0007669"/>
    <property type="project" value="InterPro"/>
</dbReference>
<dbReference type="CDD" id="cd01913">
    <property type="entry name" value="protease_HslV"/>
    <property type="match status" value="1"/>
</dbReference>
<dbReference type="FunFam" id="3.60.20.10:FF:000002">
    <property type="entry name" value="ATP-dependent protease subunit HslV"/>
    <property type="match status" value="1"/>
</dbReference>
<dbReference type="Gene3D" id="3.60.20.10">
    <property type="entry name" value="Glutamine Phosphoribosylpyrophosphate, subunit 1, domain 1"/>
    <property type="match status" value="1"/>
</dbReference>
<dbReference type="HAMAP" id="MF_00248">
    <property type="entry name" value="HslV"/>
    <property type="match status" value="1"/>
</dbReference>
<dbReference type="InterPro" id="IPR022281">
    <property type="entry name" value="ATP-dep_Prtase_HsIV_su"/>
</dbReference>
<dbReference type="InterPro" id="IPR029055">
    <property type="entry name" value="Ntn_hydrolases_N"/>
</dbReference>
<dbReference type="InterPro" id="IPR001353">
    <property type="entry name" value="Proteasome_sua/b"/>
</dbReference>
<dbReference type="InterPro" id="IPR023333">
    <property type="entry name" value="Proteasome_suB-type"/>
</dbReference>
<dbReference type="NCBIfam" id="TIGR03692">
    <property type="entry name" value="ATP_dep_HslV"/>
    <property type="match status" value="1"/>
</dbReference>
<dbReference type="NCBIfam" id="NF003964">
    <property type="entry name" value="PRK05456.1"/>
    <property type="match status" value="1"/>
</dbReference>
<dbReference type="PANTHER" id="PTHR32194:SF7">
    <property type="entry name" value="ATP-DEPENDENT PROTEASE SUBUNIT HSLV"/>
    <property type="match status" value="1"/>
</dbReference>
<dbReference type="PANTHER" id="PTHR32194">
    <property type="entry name" value="METALLOPROTEASE TLDD"/>
    <property type="match status" value="1"/>
</dbReference>
<dbReference type="Pfam" id="PF00227">
    <property type="entry name" value="Proteasome"/>
    <property type="match status" value="1"/>
</dbReference>
<dbReference type="PIRSF" id="PIRSF039093">
    <property type="entry name" value="HslV"/>
    <property type="match status" value="1"/>
</dbReference>
<dbReference type="SUPFAM" id="SSF56235">
    <property type="entry name" value="N-terminal nucleophile aminohydrolases (Ntn hydrolases)"/>
    <property type="match status" value="1"/>
</dbReference>
<dbReference type="PROSITE" id="PS51476">
    <property type="entry name" value="PROTEASOME_BETA_2"/>
    <property type="match status" value="1"/>
</dbReference>
<feature type="chain" id="PRO_1000078414" description="ATP-dependent protease subunit HslV">
    <location>
        <begin position="1"/>
        <end position="182"/>
    </location>
</feature>
<feature type="active site" evidence="1">
    <location>
        <position position="12"/>
    </location>
</feature>
<feature type="binding site" evidence="1">
    <location>
        <position position="167"/>
    </location>
    <ligand>
        <name>Na(+)</name>
        <dbReference type="ChEBI" id="CHEBI:29101"/>
    </ligand>
</feature>
<feature type="binding site" evidence="1">
    <location>
        <position position="170"/>
    </location>
    <ligand>
        <name>Na(+)</name>
        <dbReference type="ChEBI" id="CHEBI:29101"/>
    </ligand>
</feature>
<feature type="binding site" evidence="1">
    <location>
        <position position="173"/>
    </location>
    <ligand>
        <name>Na(+)</name>
        <dbReference type="ChEBI" id="CHEBI:29101"/>
    </ligand>
</feature>
<reference key="1">
    <citation type="submission" date="2007-05" db="EMBL/GenBank/DDBJ databases">
        <title>Complete sequence of chromosome of Acidiphilium cryptum JF-5.</title>
        <authorList>
            <consortium name="US DOE Joint Genome Institute"/>
            <person name="Copeland A."/>
            <person name="Lucas S."/>
            <person name="Lapidus A."/>
            <person name="Barry K."/>
            <person name="Detter J.C."/>
            <person name="Glavina del Rio T."/>
            <person name="Hammon N."/>
            <person name="Israni S."/>
            <person name="Dalin E."/>
            <person name="Tice H."/>
            <person name="Pitluck S."/>
            <person name="Sims D."/>
            <person name="Brettin T."/>
            <person name="Bruce D."/>
            <person name="Han C."/>
            <person name="Schmutz J."/>
            <person name="Larimer F."/>
            <person name="Land M."/>
            <person name="Hauser L."/>
            <person name="Kyrpides N."/>
            <person name="Kim E."/>
            <person name="Magnuson T."/>
            <person name="Richardson P."/>
        </authorList>
    </citation>
    <scope>NUCLEOTIDE SEQUENCE [LARGE SCALE GENOMIC DNA]</scope>
    <source>
        <strain>JF-5</strain>
    </source>
</reference>
<keyword id="KW-0021">Allosteric enzyme</keyword>
<keyword id="KW-0963">Cytoplasm</keyword>
<keyword id="KW-0378">Hydrolase</keyword>
<keyword id="KW-0479">Metal-binding</keyword>
<keyword id="KW-0645">Protease</keyword>
<keyword id="KW-1185">Reference proteome</keyword>
<keyword id="KW-0915">Sodium</keyword>
<keyword id="KW-0888">Threonine protease</keyword>
<proteinExistence type="inferred from homology"/>
<organism>
    <name type="scientific">Acidiphilium cryptum (strain JF-5)</name>
    <dbReference type="NCBI Taxonomy" id="349163"/>
    <lineage>
        <taxon>Bacteria</taxon>
        <taxon>Pseudomonadati</taxon>
        <taxon>Pseudomonadota</taxon>
        <taxon>Alphaproteobacteria</taxon>
        <taxon>Acetobacterales</taxon>
        <taxon>Acidocellaceae</taxon>
        <taxon>Acidiphilium</taxon>
    </lineage>
</organism>
<evidence type="ECO:0000255" key="1">
    <source>
        <dbReference type="HAMAP-Rule" id="MF_00248"/>
    </source>
</evidence>
<sequence>MNTNDPVGWHGTTILCVRRDEQVAMAGDGQVSLGNTVVKGNARKVRRIGNGNVVAGFAGATADAFTLLERLEAKLERFPNQLERACVELAKDWRTDRYLRRLEAMMAVADRTHAYTLTGNGDVLEPEDGIIAIGSGGNYALAAARALISVDGMTAEDIARRAMKIAGDICVYTNHHVTVEIL</sequence>
<comment type="function">
    <text evidence="1">Protease subunit of a proteasome-like degradation complex believed to be a general protein degrading machinery.</text>
</comment>
<comment type="catalytic activity">
    <reaction evidence="1">
        <text>ATP-dependent cleavage of peptide bonds with broad specificity.</text>
        <dbReference type="EC" id="3.4.25.2"/>
    </reaction>
</comment>
<comment type="activity regulation">
    <text evidence="1">Allosterically activated by HslU binding.</text>
</comment>
<comment type="subunit">
    <text evidence="1">A double ring-shaped homohexamer of HslV is capped on each side by a ring-shaped HslU homohexamer. The assembly of the HslU/HslV complex is dependent on binding of ATP.</text>
</comment>
<comment type="subcellular location">
    <subcellularLocation>
        <location evidence="1">Cytoplasm</location>
    </subcellularLocation>
</comment>
<comment type="similarity">
    <text evidence="1">Belongs to the peptidase T1B family. HslV subfamily.</text>
</comment>
<accession>A5FYD8</accession>
<name>HSLV_ACICJ</name>
<protein>
    <recommendedName>
        <fullName evidence="1">ATP-dependent protease subunit HslV</fullName>
        <ecNumber evidence="1">3.4.25.2</ecNumber>
    </recommendedName>
</protein>
<gene>
    <name evidence="1" type="primary">hslV</name>
    <name type="ordered locus">Acry_1410</name>
</gene>